<sequence>MKKPFNVIAIIGKPRDQQAIQTHRDLYHWLSSLGYQVFIDDRLSAILNDVPEEHFSGLVELGEKADLAIVVGGDGNMLGAARILSRFNTRVIGVNRGNLGFLTDLNPEDFQHSLEAVLDGAYIEEERFLLEAEIHRHGQVKSHNAALNEAVLHPGQVAHMIEFEVYIDESFAFSLRADGLIVSTPTGSTAYSLSGGGPILSPSLNAISLVPMFPHTLSSRPLVVDGNRRIKLLVSPDNRGTQEVSCDGQVSLPVSPGDEIHIYQSPNRLRLIHPKDYSYYHVLRNKLGWSSKLF</sequence>
<reference key="1">
    <citation type="submission" date="2002-12" db="EMBL/GenBank/DDBJ databases">
        <title>Complete genome sequence of Vibrio vulnificus CMCP6.</title>
        <authorList>
            <person name="Rhee J.H."/>
            <person name="Kim S.Y."/>
            <person name="Chung S.S."/>
            <person name="Kim J.J."/>
            <person name="Moon Y.H."/>
            <person name="Jeong H."/>
            <person name="Choy H.E."/>
        </authorList>
    </citation>
    <scope>NUCLEOTIDE SEQUENCE [LARGE SCALE GENOMIC DNA]</scope>
    <source>
        <strain>CMCP6</strain>
    </source>
</reference>
<proteinExistence type="inferred from homology"/>
<comment type="function">
    <text evidence="1">Involved in the regulation of the intracellular balance of NAD and NADP, and is a key enzyme in the biosynthesis of NADP. Catalyzes specifically the phosphorylation on 2'-hydroxyl of the adenosine moiety of NAD to yield NADP.</text>
</comment>
<comment type="catalytic activity">
    <reaction evidence="1">
        <text>NAD(+) + ATP = ADP + NADP(+) + H(+)</text>
        <dbReference type="Rhea" id="RHEA:18629"/>
        <dbReference type="ChEBI" id="CHEBI:15378"/>
        <dbReference type="ChEBI" id="CHEBI:30616"/>
        <dbReference type="ChEBI" id="CHEBI:57540"/>
        <dbReference type="ChEBI" id="CHEBI:58349"/>
        <dbReference type="ChEBI" id="CHEBI:456216"/>
        <dbReference type="EC" id="2.7.1.23"/>
    </reaction>
</comment>
<comment type="cofactor">
    <cofactor evidence="1">
        <name>a divalent metal cation</name>
        <dbReference type="ChEBI" id="CHEBI:60240"/>
    </cofactor>
</comment>
<comment type="subcellular location">
    <subcellularLocation>
        <location evidence="1">Cytoplasm</location>
    </subcellularLocation>
</comment>
<comment type="similarity">
    <text evidence="1">Belongs to the NAD kinase family.</text>
</comment>
<organism>
    <name type="scientific">Vibrio vulnificus (strain CMCP6)</name>
    <dbReference type="NCBI Taxonomy" id="216895"/>
    <lineage>
        <taxon>Bacteria</taxon>
        <taxon>Pseudomonadati</taxon>
        <taxon>Pseudomonadota</taxon>
        <taxon>Gammaproteobacteria</taxon>
        <taxon>Vibrionales</taxon>
        <taxon>Vibrionaceae</taxon>
        <taxon>Vibrio</taxon>
    </lineage>
</organism>
<accession>Q8DF58</accession>
<protein>
    <recommendedName>
        <fullName evidence="1">NAD kinase</fullName>
        <ecNumber evidence="1">2.7.1.23</ecNumber>
    </recommendedName>
    <alternativeName>
        <fullName evidence="1">ATP-dependent NAD kinase</fullName>
    </alternativeName>
</protein>
<name>NADK_VIBVU</name>
<feature type="chain" id="PRO_0000120688" description="NAD kinase">
    <location>
        <begin position="1"/>
        <end position="294"/>
    </location>
</feature>
<feature type="active site" description="Proton acceptor" evidence="1">
    <location>
        <position position="74"/>
    </location>
</feature>
<feature type="binding site" evidence="1">
    <location>
        <begin position="74"/>
        <end position="75"/>
    </location>
    <ligand>
        <name>NAD(+)</name>
        <dbReference type="ChEBI" id="CHEBI:57540"/>
    </ligand>
</feature>
<feature type="binding site" evidence="1">
    <location>
        <begin position="148"/>
        <end position="149"/>
    </location>
    <ligand>
        <name>NAD(+)</name>
        <dbReference type="ChEBI" id="CHEBI:57540"/>
    </ligand>
</feature>
<feature type="binding site" evidence="1">
    <location>
        <position position="159"/>
    </location>
    <ligand>
        <name>NAD(+)</name>
        <dbReference type="ChEBI" id="CHEBI:57540"/>
    </ligand>
</feature>
<feature type="binding site" evidence="1">
    <location>
        <position position="176"/>
    </location>
    <ligand>
        <name>NAD(+)</name>
        <dbReference type="ChEBI" id="CHEBI:57540"/>
    </ligand>
</feature>
<feature type="binding site" evidence="1">
    <location>
        <position position="178"/>
    </location>
    <ligand>
        <name>NAD(+)</name>
        <dbReference type="ChEBI" id="CHEBI:57540"/>
    </ligand>
</feature>
<feature type="binding site" evidence="1">
    <location>
        <begin position="189"/>
        <end position="194"/>
    </location>
    <ligand>
        <name>NAD(+)</name>
        <dbReference type="ChEBI" id="CHEBI:57540"/>
    </ligand>
</feature>
<feature type="binding site" evidence="1">
    <location>
        <position position="249"/>
    </location>
    <ligand>
        <name>NAD(+)</name>
        <dbReference type="ChEBI" id="CHEBI:57540"/>
    </ligand>
</feature>
<evidence type="ECO:0000255" key="1">
    <source>
        <dbReference type="HAMAP-Rule" id="MF_00361"/>
    </source>
</evidence>
<keyword id="KW-0067">ATP-binding</keyword>
<keyword id="KW-0963">Cytoplasm</keyword>
<keyword id="KW-0418">Kinase</keyword>
<keyword id="KW-0520">NAD</keyword>
<keyword id="KW-0521">NADP</keyword>
<keyword id="KW-0547">Nucleotide-binding</keyword>
<keyword id="KW-0808">Transferase</keyword>
<gene>
    <name evidence="1" type="primary">nadK</name>
    <name type="ordered locus">VV1_0366</name>
</gene>
<dbReference type="EC" id="2.7.1.23" evidence="1"/>
<dbReference type="EMBL" id="AE016795">
    <property type="protein sequence ID" value="AAO08890.1"/>
    <property type="molecule type" value="Genomic_DNA"/>
</dbReference>
<dbReference type="RefSeq" id="WP_011078461.1">
    <property type="nucleotide sequence ID" value="NC_004459.3"/>
</dbReference>
<dbReference type="SMR" id="Q8DF58"/>
<dbReference type="KEGG" id="vvu:VV1_0366"/>
<dbReference type="HOGENOM" id="CLU_008831_0_1_6"/>
<dbReference type="Proteomes" id="UP000002275">
    <property type="component" value="Chromosome 1"/>
</dbReference>
<dbReference type="GO" id="GO:0005737">
    <property type="term" value="C:cytoplasm"/>
    <property type="evidence" value="ECO:0007669"/>
    <property type="project" value="UniProtKB-SubCell"/>
</dbReference>
<dbReference type="GO" id="GO:0005524">
    <property type="term" value="F:ATP binding"/>
    <property type="evidence" value="ECO:0007669"/>
    <property type="project" value="UniProtKB-KW"/>
</dbReference>
<dbReference type="GO" id="GO:0046872">
    <property type="term" value="F:metal ion binding"/>
    <property type="evidence" value="ECO:0007669"/>
    <property type="project" value="UniProtKB-UniRule"/>
</dbReference>
<dbReference type="GO" id="GO:0051287">
    <property type="term" value="F:NAD binding"/>
    <property type="evidence" value="ECO:0007669"/>
    <property type="project" value="UniProtKB-ARBA"/>
</dbReference>
<dbReference type="GO" id="GO:0003951">
    <property type="term" value="F:NAD+ kinase activity"/>
    <property type="evidence" value="ECO:0007669"/>
    <property type="project" value="UniProtKB-UniRule"/>
</dbReference>
<dbReference type="GO" id="GO:0019674">
    <property type="term" value="P:NAD metabolic process"/>
    <property type="evidence" value="ECO:0007669"/>
    <property type="project" value="InterPro"/>
</dbReference>
<dbReference type="GO" id="GO:0006741">
    <property type="term" value="P:NADP biosynthetic process"/>
    <property type="evidence" value="ECO:0007669"/>
    <property type="project" value="UniProtKB-UniRule"/>
</dbReference>
<dbReference type="FunFam" id="2.60.200.30:FF:000001">
    <property type="entry name" value="NAD kinase"/>
    <property type="match status" value="1"/>
</dbReference>
<dbReference type="Gene3D" id="3.40.50.10330">
    <property type="entry name" value="Probable inorganic polyphosphate/atp-NAD kinase, domain 1"/>
    <property type="match status" value="1"/>
</dbReference>
<dbReference type="Gene3D" id="2.60.200.30">
    <property type="entry name" value="Probable inorganic polyphosphate/atp-NAD kinase, domain 2"/>
    <property type="match status" value="1"/>
</dbReference>
<dbReference type="HAMAP" id="MF_00361">
    <property type="entry name" value="NAD_kinase"/>
    <property type="match status" value="1"/>
</dbReference>
<dbReference type="InterPro" id="IPR017438">
    <property type="entry name" value="ATP-NAD_kinase_N"/>
</dbReference>
<dbReference type="InterPro" id="IPR017437">
    <property type="entry name" value="ATP-NAD_kinase_PpnK-typ_C"/>
</dbReference>
<dbReference type="InterPro" id="IPR016064">
    <property type="entry name" value="NAD/diacylglycerol_kinase_sf"/>
</dbReference>
<dbReference type="InterPro" id="IPR002504">
    <property type="entry name" value="NADK"/>
</dbReference>
<dbReference type="NCBIfam" id="NF002306">
    <property type="entry name" value="PRK01231.1"/>
    <property type="match status" value="1"/>
</dbReference>
<dbReference type="NCBIfam" id="NF002893">
    <property type="entry name" value="PRK03378.1"/>
    <property type="match status" value="1"/>
</dbReference>
<dbReference type="PANTHER" id="PTHR20275">
    <property type="entry name" value="NAD KINASE"/>
    <property type="match status" value="1"/>
</dbReference>
<dbReference type="PANTHER" id="PTHR20275:SF0">
    <property type="entry name" value="NAD KINASE"/>
    <property type="match status" value="1"/>
</dbReference>
<dbReference type="Pfam" id="PF01513">
    <property type="entry name" value="NAD_kinase"/>
    <property type="match status" value="1"/>
</dbReference>
<dbReference type="Pfam" id="PF20143">
    <property type="entry name" value="NAD_kinase_C"/>
    <property type="match status" value="1"/>
</dbReference>
<dbReference type="SUPFAM" id="SSF111331">
    <property type="entry name" value="NAD kinase/diacylglycerol kinase-like"/>
    <property type="match status" value="1"/>
</dbReference>